<accession>Q5X170</accession>
<proteinExistence type="inferred from homology"/>
<feature type="chain" id="PRO_0000416362" description="NAD(P)H-hydrate epimerase">
    <location>
        <begin position="1"/>
        <end position="270"/>
    </location>
</feature>
<feature type="domain" description="YjeF N-terminal" evidence="1">
    <location>
        <begin position="25"/>
        <end position="234"/>
    </location>
</feature>
<feature type="binding site" evidence="1">
    <location>
        <begin position="73"/>
        <end position="77"/>
    </location>
    <ligand>
        <name>(6S)-NADPHX</name>
        <dbReference type="ChEBI" id="CHEBI:64076"/>
    </ligand>
</feature>
<feature type="binding site" evidence="1">
    <location>
        <position position="74"/>
    </location>
    <ligand>
        <name>K(+)</name>
        <dbReference type="ChEBI" id="CHEBI:29103"/>
    </ligand>
</feature>
<feature type="binding site" evidence="1">
    <location>
        <position position="144"/>
    </location>
    <ligand>
        <name>K(+)</name>
        <dbReference type="ChEBI" id="CHEBI:29103"/>
    </ligand>
</feature>
<feature type="binding site" evidence="1">
    <location>
        <begin position="148"/>
        <end position="154"/>
    </location>
    <ligand>
        <name>(6S)-NADPHX</name>
        <dbReference type="ChEBI" id="CHEBI:64076"/>
    </ligand>
</feature>
<feature type="binding site" evidence="1">
    <location>
        <position position="177"/>
    </location>
    <ligand>
        <name>(6S)-NADPHX</name>
        <dbReference type="ChEBI" id="CHEBI:64076"/>
    </ligand>
</feature>
<feature type="binding site" evidence="1">
    <location>
        <position position="180"/>
    </location>
    <ligand>
        <name>K(+)</name>
        <dbReference type="ChEBI" id="CHEBI:29103"/>
    </ligand>
</feature>
<comment type="function">
    <text evidence="1">Catalyzes the epimerization of the S- and R-forms of NAD(P)HX, a damaged form of NAD(P)H that is a result of enzymatic or heat-dependent hydration. This is a prerequisite for the S-specific NAD(P)H-hydrate dehydratase to allow the repair of both epimers of NAD(P)HX.</text>
</comment>
<comment type="catalytic activity">
    <reaction evidence="1">
        <text>(6R)-NADHX = (6S)-NADHX</text>
        <dbReference type="Rhea" id="RHEA:32215"/>
        <dbReference type="ChEBI" id="CHEBI:64074"/>
        <dbReference type="ChEBI" id="CHEBI:64075"/>
        <dbReference type="EC" id="5.1.99.6"/>
    </reaction>
</comment>
<comment type="catalytic activity">
    <reaction evidence="1">
        <text>(6R)-NADPHX = (6S)-NADPHX</text>
        <dbReference type="Rhea" id="RHEA:32227"/>
        <dbReference type="ChEBI" id="CHEBI:64076"/>
        <dbReference type="ChEBI" id="CHEBI:64077"/>
        <dbReference type="EC" id="5.1.99.6"/>
    </reaction>
</comment>
<comment type="cofactor">
    <cofactor evidence="1">
        <name>K(+)</name>
        <dbReference type="ChEBI" id="CHEBI:29103"/>
    </cofactor>
    <text evidence="1">Binds 1 potassium ion per subunit.</text>
</comment>
<comment type="similarity">
    <text evidence="1">Belongs to the NnrE/AIBP family.</text>
</comment>
<reference key="1">
    <citation type="journal article" date="2004" name="Nat. Genet.">
        <title>Evidence in the Legionella pneumophila genome for exploitation of host cell functions and high genome plasticity.</title>
        <authorList>
            <person name="Cazalet C."/>
            <person name="Rusniok C."/>
            <person name="Brueggemann H."/>
            <person name="Zidane N."/>
            <person name="Magnier A."/>
            <person name="Ma L."/>
            <person name="Tichit M."/>
            <person name="Jarraud S."/>
            <person name="Bouchier C."/>
            <person name="Vandenesch F."/>
            <person name="Kunst F."/>
            <person name="Etienne J."/>
            <person name="Glaser P."/>
            <person name="Buchrieser C."/>
        </authorList>
    </citation>
    <scope>NUCLEOTIDE SEQUENCE [LARGE SCALE GENOMIC DNA]</scope>
    <source>
        <strain>Paris</strain>
    </source>
</reference>
<sequence length="270" mass="30385">MDYYFTKGKPQLVNMKTPIYLVTQFQQLMDLMQNQYEVSCLELMQRSGKAACDFLVYRWPKVKKISIFCGRGDNGGQGYVLAQQAKKMGMIPTVWQVGHQMSMSKPPQMHKEVWYEMNSCHQQGIVLHTYSPDIDLGDPELIVDALFGVGLYGHVRPEIALLLQRLQQFTVPILAIEVPTGINASTGEIAGNALAATATITFLCMKLGLLINDGKIYSGEIAFDDLLAPEEIYQQVKGIEESSLLDSSTCFSKKIWYRNKTQKGWQLSIN</sequence>
<keyword id="KW-0413">Isomerase</keyword>
<keyword id="KW-0479">Metal-binding</keyword>
<keyword id="KW-0520">NAD</keyword>
<keyword id="KW-0521">NADP</keyword>
<keyword id="KW-0547">Nucleotide-binding</keyword>
<keyword id="KW-0630">Potassium</keyword>
<evidence type="ECO:0000255" key="1">
    <source>
        <dbReference type="HAMAP-Rule" id="MF_01966"/>
    </source>
</evidence>
<protein>
    <recommendedName>
        <fullName evidence="1">NAD(P)H-hydrate epimerase</fullName>
        <ecNumber evidence="1">5.1.99.6</ecNumber>
    </recommendedName>
    <alternativeName>
        <fullName evidence="1">NAD(P)HX epimerase</fullName>
    </alternativeName>
</protein>
<organism>
    <name type="scientific">Legionella pneumophila (strain Paris)</name>
    <dbReference type="NCBI Taxonomy" id="297246"/>
    <lineage>
        <taxon>Bacteria</taxon>
        <taxon>Pseudomonadati</taxon>
        <taxon>Pseudomonadota</taxon>
        <taxon>Gammaproteobacteria</taxon>
        <taxon>Legionellales</taxon>
        <taxon>Legionellaceae</taxon>
        <taxon>Legionella</taxon>
    </lineage>
</organism>
<gene>
    <name evidence="1" type="primary">nnrE</name>
    <name type="ordered locus">lpp2874</name>
</gene>
<dbReference type="EC" id="5.1.99.6" evidence="1"/>
<dbReference type="EMBL" id="CR628336">
    <property type="protein sequence ID" value="CAH14027.1"/>
    <property type="molecule type" value="Genomic_DNA"/>
</dbReference>
<dbReference type="RefSeq" id="WP_015961833.1">
    <property type="nucleotide sequence ID" value="NC_006368.1"/>
</dbReference>
<dbReference type="SMR" id="Q5X170"/>
<dbReference type="KEGG" id="lpp:lpp2874"/>
<dbReference type="LegioList" id="lpp2874"/>
<dbReference type="HOGENOM" id="CLU_024853_0_1_6"/>
<dbReference type="GO" id="GO:0046872">
    <property type="term" value="F:metal ion binding"/>
    <property type="evidence" value="ECO:0007669"/>
    <property type="project" value="UniProtKB-KW"/>
</dbReference>
<dbReference type="GO" id="GO:0052856">
    <property type="term" value="F:NAD(P)HX epimerase activity"/>
    <property type="evidence" value="ECO:0007669"/>
    <property type="project" value="UniProtKB-UniRule"/>
</dbReference>
<dbReference type="GO" id="GO:0000166">
    <property type="term" value="F:nucleotide binding"/>
    <property type="evidence" value="ECO:0007669"/>
    <property type="project" value="UniProtKB-KW"/>
</dbReference>
<dbReference type="Gene3D" id="3.40.50.10260">
    <property type="entry name" value="YjeF N-terminal domain"/>
    <property type="match status" value="1"/>
</dbReference>
<dbReference type="HAMAP" id="MF_01966">
    <property type="entry name" value="NADHX_epimerase"/>
    <property type="match status" value="1"/>
</dbReference>
<dbReference type="InterPro" id="IPR004443">
    <property type="entry name" value="YjeF_N_dom"/>
</dbReference>
<dbReference type="InterPro" id="IPR036652">
    <property type="entry name" value="YjeF_N_dom_sf"/>
</dbReference>
<dbReference type="NCBIfam" id="TIGR00197">
    <property type="entry name" value="yjeF_nterm"/>
    <property type="match status" value="1"/>
</dbReference>
<dbReference type="Pfam" id="PF03853">
    <property type="entry name" value="YjeF_N"/>
    <property type="match status" value="1"/>
</dbReference>
<dbReference type="SUPFAM" id="SSF64153">
    <property type="entry name" value="YjeF N-terminal domain-like"/>
    <property type="match status" value="1"/>
</dbReference>
<dbReference type="PROSITE" id="PS51385">
    <property type="entry name" value="YJEF_N"/>
    <property type="match status" value="1"/>
</dbReference>
<name>NNRE_LEGPA</name>